<feature type="chain" id="PRO_0000046109" description="Potassium-transporting ATPase ATP-binding subunit">
    <location>
        <begin position="1"/>
        <end position="701"/>
    </location>
</feature>
<feature type="transmembrane region" description="Helical" evidence="1">
    <location>
        <begin position="57"/>
        <end position="77"/>
    </location>
</feature>
<feature type="transmembrane region" description="Helical" evidence="1">
    <location>
        <begin position="90"/>
        <end position="110"/>
    </location>
</feature>
<feature type="transmembrane region" description="Helical" evidence="1">
    <location>
        <begin position="245"/>
        <end position="265"/>
    </location>
</feature>
<feature type="transmembrane region" description="Helical" evidence="1">
    <location>
        <begin position="276"/>
        <end position="296"/>
    </location>
</feature>
<feature type="transmembrane region" description="Helical" evidence="1">
    <location>
        <begin position="599"/>
        <end position="619"/>
    </location>
</feature>
<feature type="transmembrane region" description="Helical" evidence="1">
    <location>
        <begin position="635"/>
        <end position="655"/>
    </location>
</feature>
<feature type="transmembrane region" description="Helical" evidence="1">
    <location>
        <begin position="681"/>
        <end position="701"/>
    </location>
</feature>
<feature type="region of interest" description="Disordered" evidence="2">
    <location>
        <begin position="1"/>
        <end position="28"/>
    </location>
</feature>
<feature type="active site" description="4-aspartylphosphate intermediate" evidence="1">
    <location>
        <position position="329"/>
    </location>
</feature>
<feature type="binding site" evidence="1">
    <location>
        <position position="366"/>
    </location>
    <ligand>
        <name>ATP</name>
        <dbReference type="ChEBI" id="CHEBI:30616"/>
    </ligand>
</feature>
<feature type="binding site" evidence="1">
    <location>
        <position position="370"/>
    </location>
    <ligand>
        <name>ATP</name>
        <dbReference type="ChEBI" id="CHEBI:30616"/>
    </ligand>
</feature>
<feature type="binding site" evidence="1">
    <location>
        <begin position="397"/>
        <end position="404"/>
    </location>
    <ligand>
        <name>ATP</name>
        <dbReference type="ChEBI" id="CHEBI:30616"/>
    </ligand>
</feature>
<feature type="binding site" evidence="1">
    <location>
        <position position="416"/>
    </location>
    <ligand>
        <name>ATP</name>
        <dbReference type="ChEBI" id="CHEBI:30616"/>
    </ligand>
</feature>
<feature type="binding site" evidence="1">
    <location>
        <position position="539"/>
    </location>
    <ligand>
        <name>Mg(2+)</name>
        <dbReference type="ChEBI" id="CHEBI:18420"/>
    </ligand>
</feature>
<feature type="binding site" evidence="1">
    <location>
        <position position="543"/>
    </location>
    <ligand>
        <name>Mg(2+)</name>
        <dbReference type="ChEBI" id="CHEBI:18420"/>
    </ligand>
</feature>
<organism>
    <name type="scientific">Anabaena sp. (strain L31)</name>
    <dbReference type="NCBI Taxonomy" id="29412"/>
    <lineage>
        <taxon>Bacteria</taxon>
        <taxon>Bacillati</taxon>
        <taxon>Cyanobacteriota</taxon>
        <taxon>Cyanophyceae</taxon>
        <taxon>Nostocales</taxon>
        <taxon>Nostocaceae</taxon>
        <taxon>Anabaena</taxon>
    </lineage>
</organism>
<accession>Q9R6X1</accession>
<proteinExistence type="inferred from homology"/>
<dbReference type="EC" id="7.2.2.6" evidence="1"/>
<dbReference type="EMBL" id="AF213466">
    <property type="protein sequence ID" value="AAF19987.1"/>
    <property type="molecule type" value="Genomic_DNA"/>
</dbReference>
<dbReference type="PIR" id="T46846">
    <property type="entry name" value="T46846"/>
</dbReference>
<dbReference type="SMR" id="Q9R6X1"/>
<dbReference type="GO" id="GO:0005886">
    <property type="term" value="C:plasma membrane"/>
    <property type="evidence" value="ECO:0007669"/>
    <property type="project" value="UniProtKB-SubCell"/>
</dbReference>
<dbReference type="GO" id="GO:0005524">
    <property type="term" value="F:ATP binding"/>
    <property type="evidence" value="ECO:0007669"/>
    <property type="project" value="UniProtKB-UniRule"/>
</dbReference>
<dbReference type="GO" id="GO:0016887">
    <property type="term" value="F:ATP hydrolysis activity"/>
    <property type="evidence" value="ECO:0007669"/>
    <property type="project" value="InterPro"/>
</dbReference>
<dbReference type="GO" id="GO:0000287">
    <property type="term" value="F:magnesium ion binding"/>
    <property type="evidence" value="ECO:0007669"/>
    <property type="project" value="UniProtKB-UniRule"/>
</dbReference>
<dbReference type="GO" id="GO:0008556">
    <property type="term" value="F:P-type potassium transmembrane transporter activity"/>
    <property type="evidence" value="ECO:0007669"/>
    <property type="project" value="UniProtKB-UniRule"/>
</dbReference>
<dbReference type="CDD" id="cd02078">
    <property type="entry name" value="P-type_ATPase_K"/>
    <property type="match status" value="1"/>
</dbReference>
<dbReference type="Gene3D" id="3.40.1110.10">
    <property type="entry name" value="Calcium-transporting ATPase, cytoplasmic domain N"/>
    <property type="match status" value="1"/>
</dbReference>
<dbReference type="Gene3D" id="2.70.150.10">
    <property type="entry name" value="Calcium-transporting ATPase, cytoplasmic transduction domain A"/>
    <property type="match status" value="1"/>
</dbReference>
<dbReference type="Gene3D" id="3.40.50.1000">
    <property type="entry name" value="HAD superfamily/HAD-like"/>
    <property type="match status" value="1"/>
</dbReference>
<dbReference type="HAMAP" id="MF_00285">
    <property type="entry name" value="KdpB"/>
    <property type="match status" value="1"/>
</dbReference>
<dbReference type="InterPro" id="IPR023299">
    <property type="entry name" value="ATPase_P-typ_cyto_dom_N"/>
</dbReference>
<dbReference type="InterPro" id="IPR018303">
    <property type="entry name" value="ATPase_P-typ_P_site"/>
</dbReference>
<dbReference type="InterPro" id="IPR023298">
    <property type="entry name" value="ATPase_P-typ_TM_dom_sf"/>
</dbReference>
<dbReference type="InterPro" id="IPR008250">
    <property type="entry name" value="ATPase_P-typ_transduc_dom_A_sf"/>
</dbReference>
<dbReference type="InterPro" id="IPR036412">
    <property type="entry name" value="HAD-like_sf"/>
</dbReference>
<dbReference type="InterPro" id="IPR023214">
    <property type="entry name" value="HAD_sf"/>
</dbReference>
<dbReference type="InterPro" id="IPR006391">
    <property type="entry name" value="P-type_ATPase_bsu_IA"/>
</dbReference>
<dbReference type="InterPro" id="IPR001757">
    <property type="entry name" value="P_typ_ATPase"/>
</dbReference>
<dbReference type="InterPro" id="IPR044492">
    <property type="entry name" value="P_typ_ATPase_HD_dom"/>
</dbReference>
<dbReference type="NCBIfam" id="TIGR01494">
    <property type="entry name" value="ATPase_P-type"/>
    <property type="match status" value="2"/>
</dbReference>
<dbReference type="NCBIfam" id="TIGR01497">
    <property type="entry name" value="kdpB"/>
    <property type="match status" value="1"/>
</dbReference>
<dbReference type="PANTHER" id="PTHR43743">
    <property type="entry name" value="POTASSIUM-TRANSPORTING ATPASE ATP-BINDING SUBUNIT"/>
    <property type="match status" value="1"/>
</dbReference>
<dbReference type="PANTHER" id="PTHR43743:SF1">
    <property type="entry name" value="POTASSIUM-TRANSPORTING ATPASE ATP-BINDING SUBUNIT"/>
    <property type="match status" value="1"/>
</dbReference>
<dbReference type="Pfam" id="PF00122">
    <property type="entry name" value="E1-E2_ATPase"/>
    <property type="match status" value="1"/>
</dbReference>
<dbReference type="Pfam" id="PF00702">
    <property type="entry name" value="Hydrolase"/>
    <property type="match status" value="1"/>
</dbReference>
<dbReference type="PRINTS" id="PR00119">
    <property type="entry name" value="CATATPASE"/>
</dbReference>
<dbReference type="SFLD" id="SFLDG00002">
    <property type="entry name" value="C1.7:_P-type_atpase_like"/>
    <property type="match status" value="1"/>
</dbReference>
<dbReference type="SFLD" id="SFLDF00027">
    <property type="entry name" value="p-type_atpase"/>
    <property type="match status" value="1"/>
</dbReference>
<dbReference type="SUPFAM" id="SSF81653">
    <property type="entry name" value="Calcium ATPase, transduction domain A"/>
    <property type="match status" value="1"/>
</dbReference>
<dbReference type="SUPFAM" id="SSF81665">
    <property type="entry name" value="Calcium ATPase, transmembrane domain M"/>
    <property type="match status" value="1"/>
</dbReference>
<dbReference type="SUPFAM" id="SSF56784">
    <property type="entry name" value="HAD-like"/>
    <property type="match status" value="1"/>
</dbReference>
<dbReference type="PROSITE" id="PS00154">
    <property type="entry name" value="ATPASE_E1_E2"/>
    <property type="match status" value="1"/>
</dbReference>
<gene>
    <name evidence="1" type="primary">kdpB</name>
</gene>
<name>KDPB_ANASL</name>
<evidence type="ECO:0000255" key="1">
    <source>
        <dbReference type="HAMAP-Rule" id="MF_00285"/>
    </source>
</evidence>
<evidence type="ECO:0000256" key="2">
    <source>
        <dbReference type="SAM" id="MobiDB-lite"/>
    </source>
</evidence>
<reference key="1">
    <citation type="submission" date="1999-12" db="EMBL/GenBank/DDBJ databases">
        <title>The kdp operon of the heterocystous nitrogen-fixing cyanobacterium Anabaena sp. strain L-31.</title>
        <authorList>
            <person name="Ballal A.D."/>
            <person name="Gassel M."/>
            <person name="Schleussinger E."/>
            <person name="Rajaram H."/>
            <person name="Apte S.K."/>
            <person name="Altendorf K."/>
        </authorList>
    </citation>
    <scope>NUCLEOTIDE SEQUENCE [GENOMIC DNA]</scope>
    <source>
        <strain>L-31</strain>
    </source>
</reference>
<protein>
    <recommendedName>
        <fullName evidence="1">Potassium-transporting ATPase ATP-binding subunit</fullName>
        <ecNumber evidence="1">7.2.2.6</ecNumber>
    </recommendedName>
    <alternativeName>
        <fullName evidence="1">ATP phosphohydrolase [potassium-transporting] B chain</fullName>
    </alternativeName>
    <alternativeName>
        <fullName evidence="1">Potassium-binding and translocating subunit B</fullName>
    </alternativeName>
    <alternativeName>
        <fullName evidence="1">Potassium-translocating ATPase B chain</fullName>
    </alternativeName>
</protein>
<comment type="function">
    <text evidence="1">Part of the high-affinity ATP-driven potassium transport (or Kdp) system, which catalyzes the hydrolysis of ATP coupled with the electrogenic transport of potassium into the cytoplasm. This subunit is responsible for energy coupling to the transport system and for the release of the potassium ions to the cytoplasm.</text>
</comment>
<comment type="catalytic activity">
    <reaction evidence="1">
        <text>K(+)(out) + ATP + H2O = K(+)(in) + ADP + phosphate + H(+)</text>
        <dbReference type="Rhea" id="RHEA:16777"/>
        <dbReference type="ChEBI" id="CHEBI:15377"/>
        <dbReference type="ChEBI" id="CHEBI:15378"/>
        <dbReference type="ChEBI" id="CHEBI:29103"/>
        <dbReference type="ChEBI" id="CHEBI:30616"/>
        <dbReference type="ChEBI" id="CHEBI:43474"/>
        <dbReference type="ChEBI" id="CHEBI:456216"/>
        <dbReference type="EC" id="7.2.2.6"/>
    </reaction>
    <physiologicalReaction direction="left-to-right" evidence="1">
        <dbReference type="Rhea" id="RHEA:16778"/>
    </physiologicalReaction>
</comment>
<comment type="subunit">
    <text evidence="1">The system is composed of three essential subunits: KdpA, KdpB and KdpC.</text>
</comment>
<comment type="subcellular location">
    <subcellularLocation>
        <location evidence="1">Cell membrane</location>
        <topology evidence="1">Multi-pass membrane protein</topology>
    </subcellularLocation>
</comment>
<comment type="similarity">
    <text evidence="1">Belongs to the cation transport ATPase (P-type) (TC 3.A.3) family. Type IA subfamily.</text>
</comment>
<keyword id="KW-0067">ATP-binding</keyword>
<keyword id="KW-1003">Cell membrane</keyword>
<keyword id="KW-0406">Ion transport</keyword>
<keyword id="KW-0460">Magnesium</keyword>
<keyword id="KW-0472">Membrane</keyword>
<keyword id="KW-0479">Metal-binding</keyword>
<keyword id="KW-0547">Nucleotide-binding</keyword>
<keyword id="KW-0597">Phosphoprotein</keyword>
<keyword id="KW-0630">Potassium</keyword>
<keyword id="KW-0633">Potassium transport</keyword>
<keyword id="KW-1278">Translocase</keyword>
<keyword id="KW-0812">Transmembrane</keyword>
<keyword id="KW-1133">Transmembrane helix</keyword>
<keyword id="KW-0813">Transport</keyword>
<sequence>MNPDAPTPKNKSSRSRPSDRPQARKKAKIKTKGIYLRAIGDAFVKLNPKSAIRNPVMFLVWVGTIITLSVTIEPNLFGTTQQKNPQLFNGILTGILFFTVWFANFAEAVAEGRGKAQADTLRSTKSETLAKLLSPDGKITDVPSTSLKQGDTVYVVAGDVIPADGEVIMGVASVDESAITGESAPVLKESGSDIASSVTGGTRIISDELIVRVTADPGKGFIDRMIALVEGAERTKTPNEVALTVLLAVLSLVFLFVVATLPVFAYYADTPINVPILVALLVALIPTTIGGLLSAIGIAGMDRVAQFNVIATSGRAVEACGDVNTLVLDKTGTITLGNRLAEEFIPINGHSIEQVASVAWVASVFDDTPEGKSIVRLAEKLGIRYDLDPNQAQGVEFSAKTRMSGTNLPGGREARKGAVGAIKGFVRSRNGRITPELDVAYEQVSQQGGTPLAVCLDNEIYGVIYLKDIVKSGIRERFDQLRRMGVRTIMLTGDNRITASVIAQEAGVDDFIAEATPEDKISVIQREQAQGKLVAMTGDGTNDAPALAQANVGVAMNTGTQAAKEAANMVDLDSDPTKLIDIVSIGKQLLITRGALTTFSLANDIAKYFAIIPVIFASANLQSLNVMNLTSTNSAVLSALIYNALIIPALIPLALKGVQFRPLTANQLLQRNILIYGLGGVIAPFIAIKLIDVLITLVGLA</sequence>